<comment type="function">
    <text evidence="6 7 8 10 11 13 14">Lectin component of the HRD1 complex, which functions in endoplasmic reticulum (ER) quality control and ER-associated degradation (ERAD) (PubMed:18264092, PubMed:18417469, PubMed:19084021, PubMed:19346256, PubMed:21172656, PubMed:24899641). Specifically recognizes and binds improperly folded glycoproteins as well as hyperglycosylated proteins, retain them in the ER, and transfers them to the ubiquitination machinery and promote their degradation (PubMed:18264092, PubMed:18417469, PubMed:19084021, PubMed:19346256, PubMed:21172656, PubMed:24899641). Possible targets include TRPV4 as well as hyperglycosylated HSP90B1 (PubMed:17932042).</text>
</comment>
<comment type="subunit">
    <text evidence="1 7 9 10 12 15">Component of the HRD1 complex, which comprises at least SYNV1/HRD1, DERL1/2, FAM8A1, HERPUD1/HERP, OS9, SEL1L and UBE2J1 (PubMed:28827405). FAM8A1 is stabilized by interaction with SYNV1, which prevents its proteasomal degradation. OS9 and UBE2J1 recruitment to the complex may be mediated by SEL1L (PubMed:18264092, PubMed:18502753, PubMed:19084021, PubMed:28827405). Through this complex, may interact with ERLEC1 and HSPA5 (PubMed:18502753). Interacts (via C-terminus) with CPNE6 (via second C2 domain); this interaction occurs in a calcium-dependent manner in vitro (By similarity). Interacts with CREB3 (PubMed:20546900).</text>
</comment>
<comment type="interaction">
    <interactant intactId="EBI-725454">
        <id>Q13438</id>
    </interactant>
    <interactant intactId="EBI-297353">
        <id>P00533</id>
        <label>EGFR</label>
    </interactant>
    <organismsDiffer>false</organismsDiffer>
    <experiments>3</experiments>
</comment>
<comment type="interaction">
    <interactant intactId="EBI-725454">
        <id>Q13438</id>
    </interactant>
    <interactant intactId="EBI-1174818">
        <id>Q9GZT9</id>
        <label>EGLN1</label>
    </interactant>
    <organismsDiffer>false</organismsDiffer>
    <experiments>4</experiments>
</comment>
<comment type="interaction">
    <interactant intactId="EBI-725454">
        <id>Q13438</id>
    </interactant>
    <interactant intactId="EBI-1175354">
        <id>Q9H6Z9</id>
        <label>EGLN3</label>
    </interactant>
    <organismsDiffer>false</organismsDiffer>
    <experiments>2</experiments>
</comment>
<comment type="interaction">
    <interactant intactId="EBI-725454">
        <id>Q13438</id>
    </interactant>
    <interactant intactId="EBI-15600828">
        <id>O75460-1</id>
        <label>ERN1</label>
    </interactant>
    <organismsDiffer>false</organismsDiffer>
    <experiments>2</experiments>
</comment>
<comment type="interaction">
    <interactant intactId="EBI-725454">
        <id>Q13438</id>
    </interactant>
    <interactant intactId="EBI-447269">
        <id>Q16665</id>
        <label>HIF1A</label>
    </interactant>
    <organismsDiffer>false</organismsDiffer>
    <experiments>9</experiments>
</comment>
<comment type="interaction">
    <interactant intactId="EBI-725454">
        <id>Q13438</id>
    </interactant>
    <interactant intactId="EBI-17973370">
        <id>Q969Y0</id>
        <label>NXPE3</label>
    </interactant>
    <organismsDiffer>false</organismsDiffer>
    <experiments>2</experiments>
</comment>
<comment type="interaction">
    <interactant intactId="EBI-725454">
        <id>Q13438</id>
    </interactant>
    <interactant intactId="EBI-358766">
        <id>Q9UBV2</id>
        <label>SEL1L</label>
    </interactant>
    <organismsDiffer>false</organismsDiffer>
    <experiments>14</experiments>
</comment>
<comment type="subcellular location">
    <subcellularLocation>
        <location evidence="7 8 10">Endoplasmic reticulum lumen</location>
    </subcellularLocation>
</comment>
<comment type="alternative products">
    <event type="alternative splicing"/>
    <isoform>
        <id>Q13438-1</id>
        <name>1</name>
        <name>OS-9-1</name>
        <sequence type="displayed"/>
    </isoform>
    <isoform>
        <id>Q13438-2</id>
        <name>2</name>
        <name>OS-9-2</name>
        <sequence type="described" ref="VSP_004353"/>
    </isoform>
    <isoform>
        <id>Q13438-3</id>
        <name>3</name>
        <name>OS-9-3</name>
        <sequence type="described" ref="VSP_004352 VSP_004353"/>
    </isoform>
    <isoform>
        <id>Q13438-4</id>
        <name>4</name>
        <sequence type="described" ref="VSP_004352"/>
    </isoform>
    <isoform>
        <id>Q13438-5</id>
        <name>5</name>
        <sequence type="described" ref="VSP_044701 VSP_044702 VSP_004353"/>
    </isoform>
    <isoform>
        <id>Q13438-6</id>
        <name>6</name>
        <sequence type="described" ref="VSP_046001 VSP_004353"/>
    </isoform>
    <isoform>
        <id>Q13438-7</id>
        <name>7</name>
        <sequence type="described" ref="VSP_044702 VSP_004353"/>
    </isoform>
    <isoform>
        <id>Q13438-8</id>
        <name>8</name>
        <sequence type="described" ref="VSP_046770 VSP_004352 VSP_004353"/>
    </isoform>
</comment>
<comment type="tissue specificity">
    <text evidence="16">Ubiquitously expressed (PubMed:8634085). Found as well in all tumor cell lines analyzed, amplified in sarcomas (PubMed:8634085). Highly expressed in osteosarcoma SJSA-1 and rhabdomyosarcoma Rh30 cell lines (PubMed:8634085).</text>
</comment>
<comment type="tissue specificity">
    <molecule>Isoform 2</molecule>
    <text evidence="17">Isoform 2 is the major isoform detected in all cell types examined.</text>
</comment>
<comment type="induction">
    <text evidence="8 10">Up-regulated in response to endoplasmic reticulum stress (at protein level).</text>
</comment>
<comment type="PTM">
    <text evidence="8">Intramolecular disulfide bonds.</text>
</comment>
<comment type="PTM">
    <text evidence="7 8 10">Isoform 1 and isoform 2 are N-glycosylated.</text>
</comment>
<comment type="miscellaneous">
    <molecule>Isoform 1</molecule>
    <text>Major isoform.</text>
</comment>
<comment type="miscellaneous">
    <molecule>Isoform 2</molecule>
    <text evidence="22">Major isoform.</text>
</comment>
<comment type="similarity">
    <text evidence="22">Belongs to the OS-9 family.</text>
</comment>
<proteinExistence type="evidence at protein level"/>
<name>OS9_HUMAN</name>
<dbReference type="EMBL" id="U41635">
    <property type="protein sequence ID" value="AAB06495.1"/>
    <property type="molecule type" value="mRNA"/>
</dbReference>
<dbReference type="EMBL" id="AB002805">
    <property type="protein sequence ID" value="BAA24362.1"/>
    <property type="molecule type" value="Genomic_DNA"/>
</dbReference>
<dbReference type="EMBL" id="AB002806">
    <property type="protein sequence ID" value="BAA24363.1"/>
    <property type="molecule type" value="mRNA"/>
</dbReference>
<dbReference type="EMBL" id="AK291374">
    <property type="protein sequence ID" value="BAF84063.1"/>
    <property type="molecule type" value="mRNA"/>
</dbReference>
<dbReference type="EMBL" id="AK293435">
    <property type="protein sequence ID" value="BAG56939.1"/>
    <property type="molecule type" value="mRNA"/>
</dbReference>
<dbReference type="EMBL" id="AK296770">
    <property type="protein sequence ID" value="BAG59349.1"/>
    <property type="molecule type" value="mRNA"/>
</dbReference>
<dbReference type="EMBL" id="AK298532">
    <property type="protein sequence ID" value="BAG60733.1"/>
    <property type="molecule type" value="mRNA"/>
</dbReference>
<dbReference type="EMBL" id="AK303858">
    <property type="protein sequence ID" value="BAG64798.1"/>
    <property type="molecule type" value="mRNA"/>
</dbReference>
<dbReference type="EMBL" id="CR456791">
    <property type="protein sequence ID" value="CAG33072.1"/>
    <property type="molecule type" value="mRNA"/>
</dbReference>
<dbReference type="EMBL" id="AC025165">
    <property type="status" value="NOT_ANNOTATED_CDS"/>
    <property type="molecule type" value="Genomic_DNA"/>
</dbReference>
<dbReference type="EMBL" id="CH471054">
    <property type="protein sequence ID" value="EAW97045.1"/>
    <property type="molecule type" value="Genomic_DNA"/>
</dbReference>
<dbReference type="EMBL" id="CH471054">
    <property type="protein sequence ID" value="EAW97046.1"/>
    <property type="molecule type" value="Genomic_DNA"/>
</dbReference>
<dbReference type="EMBL" id="CH471054">
    <property type="protein sequence ID" value="EAW97047.1"/>
    <property type="molecule type" value="Genomic_DNA"/>
</dbReference>
<dbReference type="EMBL" id="BC000532">
    <property type="protein sequence ID" value="AAH00532.1"/>
    <property type="molecule type" value="mRNA"/>
</dbReference>
<dbReference type="EMBL" id="BC007254">
    <property type="protein sequence ID" value="AAH07254.1"/>
    <property type="molecule type" value="mRNA"/>
</dbReference>
<dbReference type="EMBL" id="BC023513">
    <property type="protein sequence ID" value="AAH23513.2"/>
    <property type="molecule type" value="mRNA"/>
</dbReference>
<dbReference type="EMBL" id="U81031">
    <property type="protein sequence ID" value="AAC39523.2"/>
    <property type="molecule type" value="Genomic_DNA"/>
</dbReference>
<dbReference type="CCDS" id="CCDS31843.1">
    <molecule id="Q13438-1"/>
</dbReference>
<dbReference type="CCDS" id="CCDS31844.1">
    <molecule id="Q13438-2"/>
</dbReference>
<dbReference type="CCDS" id="CCDS31845.1">
    <molecule id="Q13438-4"/>
</dbReference>
<dbReference type="CCDS" id="CCDS31846.1">
    <molecule id="Q13438-3"/>
</dbReference>
<dbReference type="CCDS" id="CCDS58246.1">
    <molecule id="Q13438-6"/>
</dbReference>
<dbReference type="CCDS" id="CCDS58247.1">
    <molecule id="Q13438-7"/>
</dbReference>
<dbReference type="CCDS" id="CCDS58248.1">
    <molecule id="Q13438-5"/>
</dbReference>
<dbReference type="CCDS" id="CCDS58249.1">
    <molecule id="Q13438-8"/>
</dbReference>
<dbReference type="PIR" id="JC5889">
    <property type="entry name" value="JC5889"/>
</dbReference>
<dbReference type="RefSeq" id="NP_001017956.1">
    <molecule id="Q13438-2"/>
    <property type="nucleotide sequence ID" value="NM_001017956.3"/>
</dbReference>
<dbReference type="RefSeq" id="NP_001017957.1">
    <molecule id="Q13438-3"/>
    <property type="nucleotide sequence ID" value="NM_001017957.3"/>
</dbReference>
<dbReference type="RefSeq" id="NP_001017958.1">
    <molecule id="Q13438-4"/>
    <property type="nucleotide sequence ID" value="NM_001017958.3"/>
</dbReference>
<dbReference type="RefSeq" id="NP_001248349.1">
    <molecule id="Q13438-7"/>
    <property type="nucleotide sequence ID" value="NM_001261420.2"/>
</dbReference>
<dbReference type="RefSeq" id="NP_001248350.1">
    <molecule id="Q13438-5"/>
    <property type="nucleotide sequence ID" value="NM_001261421.2"/>
</dbReference>
<dbReference type="RefSeq" id="NP_001248351.1">
    <molecule id="Q13438-6"/>
    <property type="nucleotide sequence ID" value="NM_001261422.2"/>
</dbReference>
<dbReference type="RefSeq" id="NP_001248352.1">
    <molecule id="Q13438-8"/>
    <property type="nucleotide sequence ID" value="NM_001261423.2"/>
</dbReference>
<dbReference type="RefSeq" id="NP_006803.1">
    <molecule id="Q13438-1"/>
    <property type="nucleotide sequence ID" value="NM_006812.4"/>
</dbReference>
<dbReference type="PDB" id="3AIH">
    <property type="method" value="X-ray"/>
    <property type="resolution" value="2.10 A"/>
    <property type="chains" value="A/B=108-229"/>
</dbReference>
<dbReference type="PDBsum" id="3AIH"/>
<dbReference type="SMR" id="Q13438"/>
<dbReference type="BioGRID" id="116156">
    <property type="interactions" value="253"/>
</dbReference>
<dbReference type="CORUM" id="Q13438"/>
<dbReference type="DIP" id="DIP-37493N"/>
<dbReference type="FunCoup" id="Q13438">
    <property type="interactions" value="1356"/>
</dbReference>
<dbReference type="IntAct" id="Q13438">
    <property type="interactions" value="179"/>
</dbReference>
<dbReference type="MINT" id="Q13438"/>
<dbReference type="STRING" id="9606.ENSP00000318165"/>
<dbReference type="TCDB" id="8.A.67.1.1">
    <property type="family name" value="the os-9 quality control (erad) protein (os-9) family"/>
</dbReference>
<dbReference type="UniLectin" id="Q13438"/>
<dbReference type="GlyConnect" id="1666">
    <property type="glycosylation" value="8 N-Linked glycans (1 site)"/>
</dbReference>
<dbReference type="GlyCosmos" id="Q13438">
    <property type="glycosylation" value="2 sites, 11 glycans"/>
</dbReference>
<dbReference type="GlyGen" id="Q13438">
    <property type="glycosylation" value="9 sites, 16 N-linked glycans (1 site), 2 O-linked glycans (8 sites)"/>
</dbReference>
<dbReference type="iPTMnet" id="Q13438"/>
<dbReference type="PhosphoSitePlus" id="Q13438"/>
<dbReference type="SwissPalm" id="Q13438"/>
<dbReference type="BioMuta" id="OS9"/>
<dbReference type="DMDM" id="3024310"/>
<dbReference type="jPOST" id="Q13438"/>
<dbReference type="MassIVE" id="Q13438"/>
<dbReference type="PaxDb" id="9606-ENSP00000318165"/>
<dbReference type="PeptideAtlas" id="Q13438"/>
<dbReference type="ProteomicsDB" id="17218"/>
<dbReference type="ProteomicsDB" id="18799"/>
<dbReference type="ProteomicsDB" id="28738"/>
<dbReference type="ProteomicsDB" id="33680"/>
<dbReference type="ProteomicsDB" id="59432">
    <molecule id="Q13438-1"/>
</dbReference>
<dbReference type="ProteomicsDB" id="59433">
    <molecule id="Q13438-2"/>
</dbReference>
<dbReference type="ProteomicsDB" id="59434">
    <molecule id="Q13438-3"/>
</dbReference>
<dbReference type="ProteomicsDB" id="59435">
    <molecule id="Q13438-4"/>
</dbReference>
<dbReference type="Pumba" id="Q13438"/>
<dbReference type="Antibodypedia" id="2459">
    <property type="antibodies" value="286 antibodies from 30 providers"/>
</dbReference>
<dbReference type="DNASU" id="10956"/>
<dbReference type="Ensembl" id="ENST00000257966.13">
    <molecule id="Q13438-7"/>
    <property type="protein sequence ID" value="ENSP00000257966.8"/>
    <property type="gene ID" value="ENSG00000135506.17"/>
</dbReference>
<dbReference type="Ensembl" id="ENST00000315970.12">
    <molecule id="Q13438-1"/>
    <property type="protein sequence ID" value="ENSP00000318165.7"/>
    <property type="gene ID" value="ENSG00000135506.17"/>
</dbReference>
<dbReference type="Ensembl" id="ENST00000389142.10">
    <molecule id="Q13438-3"/>
    <property type="protein sequence ID" value="ENSP00000373794.5"/>
    <property type="gene ID" value="ENSG00000135506.17"/>
</dbReference>
<dbReference type="Ensembl" id="ENST00000389146.11">
    <molecule id="Q13438-4"/>
    <property type="protein sequence ID" value="ENSP00000373798.6"/>
    <property type="gene ID" value="ENSG00000135506.17"/>
</dbReference>
<dbReference type="Ensembl" id="ENST00000435406.6">
    <molecule id="Q13438-6"/>
    <property type="protein sequence ID" value="ENSP00000389632.2"/>
    <property type="gene ID" value="ENSG00000135506.17"/>
</dbReference>
<dbReference type="Ensembl" id="ENST00000439210.6">
    <molecule id="Q13438-8"/>
    <property type="protein sequence ID" value="ENSP00000407360.2"/>
    <property type="gene ID" value="ENSG00000135506.17"/>
</dbReference>
<dbReference type="Ensembl" id="ENST00000551035.5">
    <molecule id="Q13438-5"/>
    <property type="protein sequence ID" value="ENSP00000447866.1"/>
    <property type="gene ID" value="ENSG00000135506.17"/>
</dbReference>
<dbReference type="Ensembl" id="ENST00000552285.6">
    <molecule id="Q13438-2"/>
    <property type="protein sequence ID" value="ENSP00000450010.1"/>
    <property type="gene ID" value="ENSG00000135506.17"/>
</dbReference>
<dbReference type="GeneID" id="10956"/>
<dbReference type="KEGG" id="hsa:10956"/>
<dbReference type="MANE-Select" id="ENST00000315970.12">
    <property type="protein sequence ID" value="ENSP00000318165.7"/>
    <property type="RefSeq nucleotide sequence ID" value="NM_006812.4"/>
    <property type="RefSeq protein sequence ID" value="NP_006803.1"/>
</dbReference>
<dbReference type="UCSC" id="uc001spj.4">
    <molecule id="Q13438-1"/>
    <property type="organism name" value="human"/>
</dbReference>
<dbReference type="AGR" id="HGNC:16994"/>
<dbReference type="CTD" id="10956"/>
<dbReference type="DisGeNET" id="10956"/>
<dbReference type="GeneCards" id="OS9"/>
<dbReference type="HGNC" id="HGNC:16994">
    <property type="gene designation" value="OS9"/>
</dbReference>
<dbReference type="HPA" id="ENSG00000135506">
    <property type="expression patterns" value="Low tissue specificity"/>
</dbReference>
<dbReference type="MIM" id="609677">
    <property type="type" value="gene"/>
</dbReference>
<dbReference type="neXtProt" id="NX_Q13438"/>
<dbReference type="OpenTargets" id="ENSG00000135506"/>
<dbReference type="PharmGKB" id="PA164724245"/>
<dbReference type="VEuPathDB" id="HostDB:ENSG00000135506"/>
<dbReference type="eggNOG" id="KOG3394">
    <property type="taxonomic scope" value="Eukaryota"/>
</dbReference>
<dbReference type="GeneTree" id="ENSGT00530000063603"/>
<dbReference type="HOGENOM" id="CLU_026715_0_0_1"/>
<dbReference type="InParanoid" id="Q13438"/>
<dbReference type="OMA" id="WLKRLYV"/>
<dbReference type="OrthoDB" id="448954at2759"/>
<dbReference type="PAN-GO" id="Q13438">
    <property type="GO annotations" value="3 GO annotations based on evolutionary models"/>
</dbReference>
<dbReference type="PhylomeDB" id="Q13438"/>
<dbReference type="TreeFam" id="TF314309"/>
<dbReference type="PathwayCommons" id="Q13438"/>
<dbReference type="Reactome" id="R-HSA-382556">
    <property type="pathway name" value="ABC-family proteins mediated transport"/>
</dbReference>
<dbReference type="Reactome" id="R-HSA-5358346">
    <property type="pathway name" value="Hedgehog ligand biogenesis"/>
</dbReference>
<dbReference type="Reactome" id="R-HSA-5362768">
    <property type="pathway name" value="Hh mutants are degraded by ERAD"/>
</dbReference>
<dbReference type="Reactome" id="R-HSA-5678895">
    <property type="pathway name" value="Defective CFTR causes cystic fibrosis"/>
</dbReference>
<dbReference type="Reactome" id="R-HSA-901032">
    <property type="pathway name" value="ER Quality Control Compartment (ERQC)"/>
</dbReference>
<dbReference type="SignaLink" id="Q13438"/>
<dbReference type="SIGNOR" id="Q13438"/>
<dbReference type="BioGRID-ORCS" id="10956">
    <property type="hits" value="35 hits in 1167 CRISPR screens"/>
</dbReference>
<dbReference type="ChiTaRS" id="OS9">
    <property type="organism name" value="human"/>
</dbReference>
<dbReference type="EvolutionaryTrace" id="Q13438"/>
<dbReference type="GeneWiki" id="OS9_(gene)"/>
<dbReference type="GenomeRNAi" id="10956"/>
<dbReference type="Pharos" id="Q13438">
    <property type="development level" value="Tbio"/>
</dbReference>
<dbReference type="PRO" id="PR:Q13438"/>
<dbReference type="Proteomes" id="UP000005640">
    <property type="component" value="Chromosome 12"/>
</dbReference>
<dbReference type="RNAct" id="Q13438">
    <property type="molecule type" value="protein"/>
</dbReference>
<dbReference type="Bgee" id="ENSG00000135506">
    <property type="expression patterns" value="Expressed in calcaneal tendon and 213 other cell types or tissues"/>
</dbReference>
<dbReference type="ExpressionAtlas" id="Q13438">
    <property type="expression patterns" value="baseline and differential"/>
</dbReference>
<dbReference type="GO" id="GO:0005783">
    <property type="term" value="C:endoplasmic reticulum"/>
    <property type="evidence" value="ECO:0000314"/>
    <property type="project" value="HPA"/>
</dbReference>
<dbReference type="GO" id="GO:0005788">
    <property type="term" value="C:endoplasmic reticulum lumen"/>
    <property type="evidence" value="ECO:0000314"/>
    <property type="project" value="UniProtKB"/>
</dbReference>
<dbReference type="GO" id="GO:0005789">
    <property type="term" value="C:endoplasmic reticulum membrane"/>
    <property type="evidence" value="ECO:0000304"/>
    <property type="project" value="Reactome"/>
</dbReference>
<dbReference type="GO" id="GO:0000836">
    <property type="term" value="C:Hrd1p ubiquitin ligase complex"/>
    <property type="evidence" value="ECO:0000314"/>
    <property type="project" value="UniProtKB"/>
</dbReference>
<dbReference type="GO" id="GO:0030246">
    <property type="term" value="F:carbohydrate binding"/>
    <property type="evidence" value="ECO:0007669"/>
    <property type="project" value="UniProtKB-KW"/>
</dbReference>
<dbReference type="GO" id="GO:0140032">
    <property type="term" value="F:glycosylation-dependent protein binding"/>
    <property type="evidence" value="ECO:0000314"/>
    <property type="project" value="UniProtKB"/>
</dbReference>
<dbReference type="GO" id="GO:0002020">
    <property type="term" value="F:protease binding"/>
    <property type="evidence" value="ECO:0007669"/>
    <property type="project" value="Ensembl"/>
</dbReference>
<dbReference type="GO" id="GO:0030968">
    <property type="term" value="P:endoplasmic reticulum unfolded protein response"/>
    <property type="evidence" value="ECO:0007669"/>
    <property type="project" value="InterPro"/>
</dbReference>
<dbReference type="GO" id="GO:0036503">
    <property type="term" value="P:ERAD pathway"/>
    <property type="evidence" value="ECO:0000314"/>
    <property type="project" value="UniProtKB"/>
</dbReference>
<dbReference type="GO" id="GO:1904153">
    <property type="term" value="P:negative regulation of retrograde protein transport, ER to cytosol"/>
    <property type="evidence" value="ECO:0000315"/>
    <property type="project" value="ParkinsonsUK-UCL"/>
</dbReference>
<dbReference type="GO" id="GO:0006621">
    <property type="term" value="P:protein retention in ER lumen"/>
    <property type="evidence" value="ECO:0000314"/>
    <property type="project" value="UniProtKB"/>
</dbReference>
<dbReference type="GO" id="GO:0006605">
    <property type="term" value="P:protein targeting"/>
    <property type="evidence" value="ECO:0007669"/>
    <property type="project" value="Ensembl"/>
</dbReference>
<dbReference type="GO" id="GO:0016567">
    <property type="term" value="P:protein ubiquitination"/>
    <property type="evidence" value="ECO:0000315"/>
    <property type="project" value="UniProtKB"/>
</dbReference>
<dbReference type="GO" id="GO:0034976">
    <property type="term" value="P:response to endoplasmic reticulum stress"/>
    <property type="evidence" value="ECO:0000314"/>
    <property type="project" value="UniProtKB"/>
</dbReference>
<dbReference type="GO" id="GO:0030970">
    <property type="term" value="P:retrograde protein transport, ER to cytosol"/>
    <property type="evidence" value="ECO:0000318"/>
    <property type="project" value="GO_Central"/>
</dbReference>
<dbReference type="GO" id="GO:0006511">
    <property type="term" value="P:ubiquitin-dependent protein catabolic process"/>
    <property type="evidence" value="ECO:0000315"/>
    <property type="project" value="UniProtKB"/>
</dbReference>
<dbReference type="FunFam" id="2.70.130.10:FF:000002">
    <property type="entry name" value="protein OS-9 isoform X1"/>
    <property type="match status" value="1"/>
</dbReference>
<dbReference type="Gene3D" id="2.70.130.10">
    <property type="entry name" value="Mannose-6-phosphate receptor binding domain"/>
    <property type="match status" value="1"/>
</dbReference>
<dbReference type="InterPro" id="IPR009011">
    <property type="entry name" value="Man6P_isomerase_rcpt-bd_dom_sf"/>
</dbReference>
<dbReference type="InterPro" id="IPR044865">
    <property type="entry name" value="MRH_dom"/>
</dbReference>
<dbReference type="InterPro" id="IPR045149">
    <property type="entry name" value="OS-9-like"/>
</dbReference>
<dbReference type="InterPro" id="IPR012913">
    <property type="entry name" value="OS9-like_dom"/>
</dbReference>
<dbReference type="PANTHER" id="PTHR15414">
    <property type="entry name" value="OS-9-RELATED"/>
    <property type="match status" value="1"/>
</dbReference>
<dbReference type="PANTHER" id="PTHR15414:SF5">
    <property type="entry name" value="PROTEIN OS-9"/>
    <property type="match status" value="1"/>
</dbReference>
<dbReference type="Pfam" id="PF07915">
    <property type="entry name" value="PRKCSH"/>
    <property type="match status" value="1"/>
</dbReference>
<dbReference type="SUPFAM" id="SSF50911">
    <property type="entry name" value="Mannose 6-phosphate receptor domain"/>
    <property type="match status" value="1"/>
</dbReference>
<dbReference type="PROSITE" id="PS51914">
    <property type="entry name" value="MRH"/>
    <property type="match status" value="1"/>
</dbReference>
<evidence type="ECO:0000250" key="1">
    <source>
        <dbReference type="UniProtKB" id="Q8K2C7"/>
    </source>
</evidence>
<evidence type="ECO:0000255" key="2"/>
<evidence type="ECO:0000255" key="3">
    <source>
        <dbReference type="PROSITE-ProRule" id="PRU01262"/>
    </source>
</evidence>
<evidence type="ECO:0000256" key="4">
    <source>
        <dbReference type="SAM" id="MobiDB-lite"/>
    </source>
</evidence>
<evidence type="ECO:0000269" key="5">
    <source>
    </source>
</evidence>
<evidence type="ECO:0000269" key="6">
    <source>
    </source>
</evidence>
<evidence type="ECO:0000269" key="7">
    <source>
    </source>
</evidence>
<evidence type="ECO:0000269" key="8">
    <source>
    </source>
</evidence>
<evidence type="ECO:0000269" key="9">
    <source>
    </source>
</evidence>
<evidence type="ECO:0000269" key="10">
    <source>
    </source>
</evidence>
<evidence type="ECO:0000269" key="11">
    <source>
    </source>
</evidence>
<evidence type="ECO:0000269" key="12">
    <source>
    </source>
</evidence>
<evidence type="ECO:0000269" key="13">
    <source>
    </source>
</evidence>
<evidence type="ECO:0000269" key="14">
    <source>
    </source>
</evidence>
<evidence type="ECO:0000269" key="15">
    <source>
    </source>
</evidence>
<evidence type="ECO:0000269" key="16">
    <source>
    </source>
</evidence>
<evidence type="ECO:0000269" key="17">
    <source>
    </source>
</evidence>
<evidence type="ECO:0000303" key="18">
    <source>
    </source>
</evidence>
<evidence type="ECO:0000303" key="19">
    <source>
    </source>
</evidence>
<evidence type="ECO:0000303" key="20">
    <source>
    </source>
</evidence>
<evidence type="ECO:0000303" key="21">
    <source ref="5"/>
</evidence>
<evidence type="ECO:0000305" key="22"/>
<evidence type="ECO:0007744" key="23">
    <source>
        <dbReference type="PDB" id="3AIH"/>
    </source>
</evidence>
<evidence type="ECO:0007829" key="24">
    <source>
        <dbReference type="PDB" id="3AIH"/>
    </source>
</evidence>
<sequence>MAAETLLSSLLGLLLLGLLLPASLTGGVGSLNLEELSEMRYGIEILPLPVMGGQSQSSDVVIVSSKYKQRYECRLPAGAIHFQREREEETPAYQGPGIPELLSPMRDAPCLLKTKDWWTYEFCYGRHIQQYHMEDSEIKGEVLYLGYYQSAFDWDDETAKASKQHRLKRYHSQTYGNGSKCDLNGRPREAEVRFLCDEGAGISGDYIDRVDEPLSCSYVLTIRTPRLCPHPLLRPPPSAAPQAILCHPSLQPEEYMAYVQRQADSKQYGDKIIEELQDLGPQVWSETKSGVAPQKMAGASPTKDDSKDSDFWKMLNEPEDQAPGGEEVPAEEQDPSPEAADSASGAPNDFQNNVQVKVIRSPADLIRFIEELKGGTKKGKPNIGQEQPVDDAAEVPQREPEKERGDPERQREMEEEEDEDEDEDEDEDERQLLGEFEKELEGILLPSDRDRLRSEVKAGMERELENIIQETEKELDPDGLKKESERDRAMLALTSTLNKLIKRLEEKQSPELVKKHKKKRVVPKKPPPSPQPTEEDPEHRVRVRVTKLRLGGPNQDLTVLEMKRENPQLKQIEGLVKELLEREGLTAAGKIEIKIVRPWAEGTEEGARWLTDEDTRNLKEIFFNILVPGAEEAQKERQRQKELESNYRRVWGSPGGEGTGDLDEFDF</sequence>
<feature type="signal peptide" evidence="2">
    <location>
        <begin position="1"/>
        <end position="25"/>
    </location>
</feature>
<feature type="chain" id="PRO_0000021951" description="Protein OS-9">
    <location>
        <begin position="26"/>
        <end position="667"/>
    </location>
</feature>
<feature type="domain" description="MRH" evidence="3">
    <location>
        <begin position="108"/>
        <end position="230"/>
    </location>
</feature>
<feature type="region of interest" description="Disordered" evidence="4">
    <location>
        <begin position="284"/>
        <end position="355"/>
    </location>
</feature>
<feature type="region of interest" description="Disordered" evidence="4">
    <location>
        <begin position="372"/>
        <end position="452"/>
    </location>
</feature>
<feature type="region of interest" description="Disordered" evidence="4">
    <location>
        <begin position="464"/>
        <end position="483"/>
    </location>
</feature>
<feature type="region of interest" description="Disordered" evidence="4">
    <location>
        <begin position="504"/>
        <end position="540"/>
    </location>
</feature>
<feature type="region of interest" description="Disordered" evidence="4">
    <location>
        <begin position="633"/>
        <end position="667"/>
    </location>
</feature>
<feature type="compositionally biased region" description="Basic and acidic residues" evidence="4">
    <location>
        <begin position="302"/>
        <end position="311"/>
    </location>
</feature>
<feature type="compositionally biased region" description="Basic and acidic residues" evidence="4">
    <location>
        <begin position="396"/>
        <end position="412"/>
    </location>
</feature>
<feature type="compositionally biased region" description="Acidic residues" evidence="4">
    <location>
        <begin position="413"/>
        <end position="429"/>
    </location>
</feature>
<feature type="compositionally biased region" description="Basic and acidic residues" evidence="4">
    <location>
        <begin position="430"/>
        <end position="452"/>
    </location>
</feature>
<feature type="compositionally biased region" description="Basic and acidic residues" evidence="4">
    <location>
        <begin position="504"/>
        <end position="513"/>
    </location>
</feature>
<feature type="compositionally biased region" description="Basic residues" evidence="4">
    <location>
        <begin position="514"/>
        <end position="523"/>
    </location>
</feature>
<feature type="compositionally biased region" description="Basic and acidic residues" evidence="4">
    <location>
        <begin position="633"/>
        <end position="647"/>
    </location>
</feature>
<feature type="binding site" evidence="13 23">
    <location>
        <position position="117"/>
    </location>
    <ligand>
        <name>a mannooligosaccharide derivative</name>
        <dbReference type="ChEBI" id="CHEBI:71274"/>
    </ligand>
</feature>
<feature type="binding site" evidence="13 23">
    <location>
        <position position="118"/>
    </location>
    <ligand>
        <name>a mannooligosaccharide derivative</name>
        <dbReference type="ChEBI" id="CHEBI:71274"/>
    </ligand>
</feature>
<feature type="binding site" evidence="13 23">
    <location>
        <position position="130"/>
    </location>
    <ligand>
        <name>a mannooligosaccharide derivative</name>
        <dbReference type="ChEBI" id="CHEBI:71274"/>
    </ligand>
</feature>
<feature type="binding site" evidence="13 23">
    <location>
        <position position="182"/>
    </location>
    <ligand>
        <name>a mannooligosaccharide derivative</name>
        <dbReference type="ChEBI" id="CHEBI:71274"/>
    </ligand>
</feature>
<feature type="binding site" evidence="13 23">
    <location>
        <position position="188"/>
    </location>
    <ligand>
        <name>a mannooligosaccharide derivative</name>
        <dbReference type="ChEBI" id="CHEBI:71274"/>
    </ligand>
</feature>
<feature type="binding site" evidence="13 23">
    <location>
        <position position="212"/>
    </location>
    <ligand>
        <name>a mannooligosaccharide derivative</name>
        <dbReference type="ChEBI" id="CHEBI:71274"/>
    </ligand>
</feature>
<feature type="binding site" evidence="13 23">
    <location>
        <position position="218"/>
    </location>
    <ligand>
        <name>a mannooligosaccharide derivative</name>
        <dbReference type="ChEBI" id="CHEBI:71274"/>
    </ligand>
</feature>
<feature type="glycosylation site" description="N-linked (GlcNAc...) asparagine" evidence="2">
    <location>
        <position position="177"/>
    </location>
</feature>
<feature type="disulfide bond" evidence="3 13 23">
    <location>
        <begin position="110"/>
        <end position="123"/>
    </location>
</feature>
<feature type="disulfide bond" evidence="3 13 23">
    <location>
        <begin position="181"/>
        <end position="216"/>
    </location>
</feature>
<feature type="disulfide bond" evidence="3 13 23">
    <location>
        <begin position="196"/>
        <end position="228"/>
    </location>
</feature>
<feature type="splice variant" id="VSP_046770" description="In isoform 8." evidence="18">
    <location>
        <begin position="55"/>
        <end position="113"/>
    </location>
</feature>
<feature type="splice variant" id="VSP_046001" description="In isoform 6." evidence="18">
    <location>
        <begin position="142"/>
        <end position="193"/>
    </location>
</feature>
<feature type="splice variant" id="VSP_044701" description="In isoform 5." evidence="18">
    <location>
        <begin position="161"/>
        <end position="193"/>
    </location>
</feature>
<feature type="splice variant" id="VSP_044702" description="In isoform 5 and isoform 7." evidence="18">
    <original>A</original>
    <variation>AV</variation>
    <location>
        <position position="263"/>
    </location>
</feature>
<feature type="splice variant" id="VSP_004352" description="In isoform 3, isoform 4 and isoform 8." evidence="18">
    <location>
        <begin position="456"/>
        <end position="470"/>
    </location>
</feature>
<feature type="splice variant" id="VSP_004353" description="In isoform 2, isoform 3, isoform 5, isoform 6, isoform 7 and isoform 8." evidence="18 19 21">
    <location>
        <begin position="534"/>
        <end position="588"/>
    </location>
</feature>
<feature type="sequence variant" id="VAR_069062" description="In dbSNP:rs141986192." evidence="5">
    <original>D</original>
    <variation>N</variation>
    <location>
        <position position="305"/>
    </location>
</feature>
<feature type="sequence variant" id="VAR_011897" description="In dbSNP:rs1804598.">
    <original>R</original>
    <variation>W</variation>
    <location>
        <position position="398"/>
    </location>
</feature>
<feature type="sequence variant" id="VAR_034364" description="In dbSNP:rs34764811.">
    <original>S</original>
    <variation>L</variation>
    <location>
        <position position="454"/>
    </location>
</feature>
<feature type="mutagenesis site" description="Loss of glycan-binding activity and partial inhibition of ERAD of the misfolded glycoprotein NHK (PubMed:19346256). Reduced interaction with SEL1L (PubMed:18264092) not confirmed in (PubMed:19346256)." evidence="7 8 11">
    <original>R</original>
    <variation>A</variation>
    <location>
        <position position="188"/>
    </location>
</feature>
<feature type="sequence conflict" description="In Ref. 5; CAG33072." evidence="22" ref="5">
    <original>L</original>
    <variation>V</variation>
    <location>
        <position position="7"/>
    </location>
</feature>
<feature type="sequence conflict" description="In Ref. 4; BAG64798." evidence="22" ref="4">
    <original>F</original>
    <variation>V</variation>
    <location>
        <position position="194"/>
    </location>
</feature>
<feature type="sequence conflict" description="In Ref. 4; BAG56939." evidence="22" ref="4">
    <original>E</original>
    <variation>G</variation>
    <location>
        <position position="371"/>
    </location>
</feature>
<feature type="sequence conflict" description="In Ref. 4; BAG64798." evidence="22" ref="4">
    <original>L</original>
    <variation>F</variation>
    <location>
        <position position="497"/>
    </location>
</feature>
<feature type="sequence conflict" description="In Ref. 4; BAG60733." evidence="22" ref="4">
    <original>V</original>
    <variation>I</variation>
    <location>
        <position position="522"/>
    </location>
</feature>
<feature type="sequence conflict" description="In Ref. 4; BAG56939." evidence="22" ref="4">
    <original>S</original>
    <variation>P</variation>
    <location>
        <position position="653"/>
    </location>
</feature>
<feature type="strand" evidence="24">
    <location>
        <begin position="111"/>
        <end position="115"/>
    </location>
</feature>
<feature type="strand" evidence="24">
    <location>
        <begin position="118"/>
        <end position="123"/>
    </location>
</feature>
<feature type="turn" evidence="24">
    <location>
        <begin position="124"/>
        <end position="126"/>
    </location>
</feature>
<feature type="strand" evidence="24">
    <location>
        <begin position="127"/>
        <end position="131"/>
    </location>
</feature>
<feature type="strand" evidence="24">
    <location>
        <begin position="143"/>
        <end position="155"/>
    </location>
</feature>
<feature type="strand" evidence="24">
    <location>
        <begin position="169"/>
        <end position="176"/>
    </location>
</feature>
<feature type="turn" evidence="24">
    <location>
        <begin position="182"/>
        <end position="184"/>
    </location>
</feature>
<feature type="strand" evidence="24">
    <location>
        <begin position="189"/>
        <end position="196"/>
    </location>
</feature>
<feature type="strand" evidence="24">
    <location>
        <begin position="206"/>
        <end position="214"/>
    </location>
</feature>
<feature type="strand" evidence="24">
    <location>
        <begin position="217"/>
        <end position="224"/>
    </location>
</feature>
<feature type="helix" evidence="24">
    <location>
        <begin position="225"/>
        <end position="227"/>
    </location>
</feature>
<organism>
    <name type="scientific">Homo sapiens</name>
    <name type="common">Human</name>
    <dbReference type="NCBI Taxonomy" id="9606"/>
    <lineage>
        <taxon>Eukaryota</taxon>
        <taxon>Metazoa</taxon>
        <taxon>Chordata</taxon>
        <taxon>Craniata</taxon>
        <taxon>Vertebrata</taxon>
        <taxon>Euteleostomi</taxon>
        <taxon>Mammalia</taxon>
        <taxon>Eutheria</taxon>
        <taxon>Euarchontoglires</taxon>
        <taxon>Primates</taxon>
        <taxon>Haplorrhini</taxon>
        <taxon>Catarrhini</taxon>
        <taxon>Hominidae</taxon>
        <taxon>Homo</taxon>
    </lineage>
</organism>
<keyword id="KW-0002">3D-structure</keyword>
<keyword id="KW-0025">Alternative splicing</keyword>
<keyword id="KW-1015">Disulfide bond</keyword>
<keyword id="KW-0256">Endoplasmic reticulum</keyword>
<keyword id="KW-0325">Glycoprotein</keyword>
<keyword id="KW-0430">Lectin</keyword>
<keyword id="KW-1267">Proteomics identification</keyword>
<keyword id="KW-1185">Reference proteome</keyword>
<keyword id="KW-0732">Signal</keyword>
<protein>
    <recommendedName>
        <fullName evidence="20">Protein OS-9</fullName>
    </recommendedName>
    <alternativeName>
        <fullName evidence="20">Amplified in osteosarcoma 9</fullName>
    </alternativeName>
</protein>
<accession>Q13438</accession>
<accession>A6NDD1</accession>
<accession>A6NFR7</accession>
<accession>A6NLB2</accession>
<accession>A8K5Q9</accession>
<accession>B4DE28</accession>
<accession>B4DPX1</accession>
<accession>B4E1I6</accession>
<accession>E7ENT8</accession>
<accession>E7EW91</accession>
<accession>F8VUH2</accession>
<accession>G3XA88</accession>
<accession>O00579</accession>
<accession>Q6IBL2</accession>
<accession>Q8IZ58</accession>
<accession>Q9BW99</accession>
<reference key="1">
    <citation type="journal article" date="1996" name="Mol. Carcinog.">
        <title>Complete sequence analysis of a gene (OS-9) ubiquitously expressed in human tissues and amplified in sarcomas.</title>
        <authorList>
            <person name="Su Y.A."/>
            <person name="Hutter C.M."/>
            <person name="Trent J.M."/>
            <person name="Meltzer P.S."/>
        </authorList>
    </citation>
    <scope>NUCLEOTIDE SEQUENCE [MRNA] (ISOFORM 1)</scope>
    <scope>TISSUE SPECIFICITY</scope>
</reference>
<reference key="2">
    <citation type="journal article" date="1997" name="J. Biochem.">
        <title>Genomic organization of the OS-9 gene amplified in human sarcomas.</title>
        <authorList>
            <person name="Kimura Y."/>
            <person name="Nakazawa M."/>
            <person name="Tsuchiya N."/>
            <person name="Asakawa S."/>
            <person name="Shimizu N."/>
            <person name="Yamada M."/>
        </authorList>
    </citation>
    <scope>NUCLEOTIDE SEQUENCE [GENOMIC DNA / MRNA] (ISOFORM 1)</scope>
</reference>
<reference key="3">
    <citation type="journal article" date="1998" name="J. Biochem.">
        <title>Cloning and characterization of three isoforms of OS-9 cDNA and expression of the OS-9 gene in various human tumor cell lines.</title>
        <authorList>
            <person name="Kimura Y."/>
            <person name="Nakazawa M."/>
            <person name="Yamada M."/>
        </authorList>
    </citation>
    <scope>NUCLEOTIDE SEQUENCE [GENOMIC DNA / MRNA] (ISOFORM 1)</scope>
    <scope>CHARACTERIZATION</scope>
    <scope>ALTERNATIVE SPLICING (ISOFORMS 2 AND 3)</scope>
    <scope>TISSUE SPECIFICITY</scope>
    <source>
        <tissue>Promyelocytic leukemia</tissue>
    </source>
</reference>
<reference key="4">
    <citation type="journal article" date="2004" name="Nat. Genet.">
        <title>Complete sequencing and characterization of 21,243 full-length human cDNAs.</title>
        <authorList>
            <person name="Ota T."/>
            <person name="Suzuki Y."/>
            <person name="Nishikawa T."/>
            <person name="Otsuki T."/>
            <person name="Sugiyama T."/>
            <person name="Irie R."/>
            <person name="Wakamatsu A."/>
            <person name="Hayashi K."/>
            <person name="Sato H."/>
            <person name="Nagai K."/>
            <person name="Kimura K."/>
            <person name="Makita H."/>
            <person name="Sekine M."/>
            <person name="Obayashi M."/>
            <person name="Nishi T."/>
            <person name="Shibahara T."/>
            <person name="Tanaka T."/>
            <person name="Ishii S."/>
            <person name="Yamamoto J."/>
            <person name="Saito K."/>
            <person name="Kawai Y."/>
            <person name="Isono Y."/>
            <person name="Nakamura Y."/>
            <person name="Nagahari K."/>
            <person name="Murakami K."/>
            <person name="Yasuda T."/>
            <person name="Iwayanagi T."/>
            <person name="Wagatsuma M."/>
            <person name="Shiratori A."/>
            <person name="Sudo H."/>
            <person name="Hosoiri T."/>
            <person name="Kaku Y."/>
            <person name="Kodaira H."/>
            <person name="Kondo H."/>
            <person name="Sugawara M."/>
            <person name="Takahashi M."/>
            <person name="Kanda K."/>
            <person name="Yokoi T."/>
            <person name="Furuya T."/>
            <person name="Kikkawa E."/>
            <person name="Omura Y."/>
            <person name="Abe K."/>
            <person name="Kamihara K."/>
            <person name="Katsuta N."/>
            <person name="Sato K."/>
            <person name="Tanikawa M."/>
            <person name="Yamazaki M."/>
            <person name="Ninomiya K."/>
            <person name="Ishibashi T."/>
            <person name="Yamashita H."/>
            <person name="Murakawa K."/>
            <person name="Fujimori K."/>
            <person name="Tanai H."/>
            <person name="Kimata M."/>
            <person name="Watanabe M."/>
            <person name="Hiraoka S."/>
            <person name="Chiba Y."/>
            <person name="Ishida S."/>
            <person name="Ono Y."/>
            <person name="Takiguchi S."/>
            <person name="Watanabe S."/>
            <person name="Yosida M."/>
            <person name="Hotuta T."/>
            <person name="Kusano J."/>
            <person name="Kanehori K."/>
            <person name="Takahashi-Fujii A."/>
            <person name="Hara H."/>
            <person name="Tanase T.-O."/>
            <person name="Nomura Y."/>
            <person name="Togiya S."/>
            <person name="Komai F."/>
            <person name="Hara R."/>
            <person name="Takeuchi K."/>
            <person name="Arita M."/>
            <person name="Imose N."/>
            <person name="Musashino K."/>
            <person name="Yuuki H."/>
            <person name="Oshima A."/>
            <person name="Sasaki N."/>
            <person name="Aotsuka S."/>
            <person name="Yoshikawa Y."/>
            <person name="Matsunawa H."/>
            <person name="Ichihara T."/>
            <person name="Shiohata N."/>
            <person name="Sano S."/>
            <person name="Moriya S."/>
            <person name="Momiyama H."/>
            <person name="Satoh N."/>
            <person name="Takami S."/>
            <person name="Terashima Y."/>
            <person name="Suzuki O."/>
            <person name="Nakagawa S."/>
            <person name="Senoh A."/>
            <person name="Mizoguchi H."/>
            <person name="Goto Y."/>
            <person name="Shimizu F."/>
            <person name="Wakebe H."/>
            <person name="Hishigaki H."/>
            <person name="Watanabe T."/>
            <person name="Sugiyama A."/>
            <person name="Takemoto M."/>
            <person name="Kawakami B."/>
            <person name="Yamazaki M."/>
            <person name="Watanabe K."/>
            <person name="Kumagai A."/>
            <person name="Itakura S."/>
            <person name="Fukuzumi Y."/>
            <person name="Fujimori Y."/>
            <person name="Komiyama M."/>
            <person name="Tashiro H."/>
            <person name="Tanigami A."/>
            <person name="Fujiwara T."/>
            <person name="Ono T."/>
            <person name="Yamada K."/>
            <person name="Fujii Y."/>
            <person name="Ozaki K."/>
            <person name="Hirao M."/>
            <person name="Ohmori Y."/>
            <person name="Kawabata A."/>
            <person name="Hikiji T."/>
            <person name="Kobatake N."/>
            <person name="Inagaki H."/>
            <person name="Ikema Y."/>
            <person name="Okamoto S."/>
            <person name="Okitani R."/>
            <person name="Kawakami T."/>
            <person name="Noguchi S."/>
            <person name="Itoh T."/>
            <person name="Shigeta K."/>
            <person name="Senba T."/>
            <person name="Matsumura K."/>
            <person name="Nakajima Y."/>
            <person name="Mizuno T."/>
            <person name="Morinaga M."/>
            <person name="Sasaki M."/>
            <person name="Togashi T."/>
            <person name="Oyama M."/>
            <person name="Hata H."/>
            <person name="Watanabe M."/>
            <person name="Komatsu T."/>
            <person name="Mizushima-Sugano J."/>
            <person name="Satoh T."/>
            <person name="Shirai Y."/>
            <person name="Takahashi Y."/>
            <person name="Nakagawa K."/>
            <person name="Okumura K."/>
            <person name="Nagase T."/>
            <person name="Nomura N."/>
            <person name="Kikuchi H."/>
            <person name="Masuho Y."/>
            <person name="Yamashita R."/>
            <person name="Nakai K."/>
            <person name="Yada T."/>
            <person name="Nakamura Y."/>
            <person name="Ohara O."/>
            <person name="Isogai T."/>
            <person name="Sugano S."/>
        </authorList>
    </citation>
    <scope>NUCLEOTIDE SEQUENCE [LARGE SCALE MRNA] (ISOFORMS 2; 4; 5; 6 AND 8)</scope>
    <scope>VARIANT ASN-305</scope>
    <source>
        <tissue>Brain</tissue>
        <tissue>Tongue</tissue>
        <tissue>Trachea</tissue>
    </source>
</reference>
<reference key="5">
    <citation type="submission" date="2004-06" db="EMBL/GenBank/DDBJ databases">
        <title>Cloning of human full open reading frames in Gateway(TM) system entry vector (pDONR201).</title>
        <authorList>
            <person name="Ebert L."/>
            <person name="Schick M."/>
            <person name="Neubert P."/>
            <person name="Schatten R."/>
            <person name="Henze S."/>
            <person name="Korn B."/>
        </authorList>
    </citation>
    <scope>NUCLEOTIDE SEQUENCE [LARGE SCALE MRNA] (ISOFORM 2)</scope>
</reference>
<reference key="6">
    <citation type="journal article" date="2006" name="Nature">
        <title>The finished DNA sequence of human chromosome 12.</title>
        <authorList>
            <person name="Scherer S.E."/>
            <person name="Muzny D.M."/>
            <person name="Buhay C.J."/>
            <person name="Chen R."/>
            <person name="Cree A."/>
            <person name="Ding Y."/>
            <person name="Dugan-Rocha S."/>
            <person name="Gill R."/>
            <person name="Gunaratne P."/>
            <person name="Harris R.A."/>
            <person name="Hawes A.C."/>
            <person name="Hernandez J."/>
            <person name="Hodgson A.V."/>
            <person name="Hume J."/>
            <person name="Jackson A."/>
            <person name="Khan Z.M."/>
            <person name="Kovar-Smith C."/>
            <person name="Lewis L.R."/>
            <person name="Lozado R.J."/>
            <person name="Metzker M.L."/>
            <person name="Milosavljevic A."/>
            <person name="Miner G.R."/>
            <person name="Montgomery K.T."/>
            <person name="Morgan M.B."/>
            <person name="Nazareth L.V."/>
            <person name="Scott G."/>
            <person name="Sodergren E."/>
            <person name="Song X.-Z."/>
            <person name="Steffen D."/>
            <person name="Lovering R.C."/>
            <person name="Wheeler D.A."/>
            <person name="Worley K.C."/>
            <person name="Yuan Y."/>
            <person name="Zhang Z."/>
            <person name="Adams C.Q."/>
            <person name="Ansari-Lari M.A."/>
            <person name="Ayele M."/>
            <person name="Brown M.J."/>
            <person name="Chen G."/>
            <person name="Chen Z."/>
            <person name="Clerc-Blankenburg K.P."/>
            <person name="Davis C."/>
            <person name="Delgado O."/>
            <person name="Dinh H.H."/>
            <person name="Draper H."/>
            <person name="Gonzalez-Garay M.L."/>
            <person name="Havlak P."/>
            <person name="Jackson L.R."/>
            <person name="Jacob L.S."/>
            <person name="Kelly S.H."/>
            <person name="Li L."/>
            <person name="Li Z."/>
            <person name="Liu J."/>
            <person name="Liu W."/>
            <person name="Lu J."/>
            <person name="Maheshwari M."/>
            <person name="Nguyen B.-V."/>
            <person name="Okwuonu G.O."/>
            <person name="Pasternak S."/>
            <person name="Perez L.M."/>
            <person name="Plopper F.J.H."/>
            <person name="Santibanez J."/>
            <person name="Shen H."/>
            <person name="Tabor P.E."/>
            <person name="Verduzco D."/>
            <person name="Waldron L."/>
            <person name="Wang Q."/>
            <person name="Williams G.A."/>
            <person name="Zhang J."/>
            <person name="Zhou J."/>
            <person name="Allen C.C."/>
            <person name="Amin A.G."/>
            <person name="Anyalebechi V."/>
            <person name="Bailey M."/>
            <person name="Barbaria J.A."/>
            <person name="Bimage K.E."/>
            <person name="Bryant N.P."/>
            <person name="Burch P.E."/>
            <person name="Burkett C.E."/>
            <person name="Burrell K.L."/>
            <person name="Calderon E."/>
            <person name="Cardenas V."/>
            <person name="Carter K."/>
            <person name="Casias K."/>
            <person name="Cavazos I."/>
            <person name="Cavazos S.R."/>
            <person name="Ceasar H."/>
            <person name="Chacko J."/>
            <person name="Chan S.N."/>
            <person name="Chavez D."/>
            <person name="Christopoulos C."/>
            <person name="Chu J."/>
            <person name="Cockrell R."/>
            <person name="Cox C.D."/>
            <person name="Dang M."/>
            <person name="Dathorne S.R."/>
            <person name="David R."/>
            <person name="Davis C.M."/>
            <person name="Davy-Carroll L."/>
            <person name="Deshazo D.R."/>
            <person name="Donlin J.E."/>
            <person name="D'Souza L."/>
            <person name="Eaves K.A."/>
            <person name="Egan A."/>
            <person name="Emery-Cohen A.J."/>
            <person name="Escotto M."/>
            <person name="Flagg N."/>
            <person name="Forbes L.D."/>
            <person name="Gabisi A.M."/>
            <person name="Garza M."/>
            <person name="Hamilton C."/>
            <person name="Henderson N."/>
            <person name="Hernandez O."/>
            <person name="Hines S."/>
            <person name="Hogues M.E."/>
            <person name="Huang M."/>
            <person name="Idlebird D.G."/>
            <person name="Johnson R."/>
            <person name="Jolivet A."/>
            <person name="Jones S."/>
            <person name="Kagan R."/>
            <person name="King L.M."/>
            <person name="Leal B."/>
            <person name="Lebow H."/>
            <person name="Lee S."/>
            <person name="LeVan J.M."/>
            <person name="Lewis L.C."/>
            <person name="London P."/>
            <person name="Lorensuhewa L.M."/>
            <person name="Loulseged H."/>
            <person name="Lovett D.A."/>
            <person name="Lucier A."/>
            <person name="Lucier R.L."/>
            <person name="Ma J."/>
            <person name="Madu R.C."/>
            <person name="Mapua P."/>
            <person name="Martindale A.D."/>
            <person name="Martinez E."/>
            <person name="Massey E."/>
            <person name="Mawhiney S."/>
            <person name="Meador M.G."/>
            <person name="Mendez S."/>
            <person name="Mercado C."/>
            <person name="Mercado I.C."/>
            <person name="Merritt C.E."/>
            <person name="Miner Z.L."/>
            <person name="Minja E."/>
            <person name="Mitchell T."/>
            <person name="Mohabbat F."/>
            <person name="Mohabbat K."/>
            <person name="Montgomery B."/>
            <person name="Moore N."/>
            <person name="Morris S."/>
            <person name="Munidasa M."/>
            <person name="Ngo R.N."/>
            <person name="Nguyen N.B."/>
            <person name="Nickerson E."/>
            <person name="Nwaokelemeh O.O."/>
            <person name="Nwokenkwo S."/>
            <person name="Obregon M."/>
            <person name="Oguh M."/>
            <person name="Oragunye N."/>
            <person name="Oviedo R.J."/>
            <person name="Parish B.J."/>
            <person name="Parker D.N."/>
            <person name="Parrish J."/>
            <person name="Parks K.L."/>
            <person name="Paul H.A."/>
            <person name="Payton B.A."/>
            <person name="Perez A."/>
            <person name="Perrin W."/>
            <person name="Pickens A."/>
            <person name="Primus E.L."/>
            <person name="Pu L.-L."/>
            <person name="Puazo M."/>
            <person name="Quiles M.M."/>
            <person name="Quiroz J.B."/>
            <person name="Rabata D."/>
            <person name="Reeves K."/>
            <person name="Ruiz S.J."/>
            <person name="Shao H."/>
            <person name="Sisson I."/>
            <person name="Sonaike T."/>
            <person name="Sorelle R.P."/>
            <person name="Sutton A.E."/>
            <person name="Svatek A.F."/>
            <person name="Svetz L.A."/>
            <person name="Tamerisa K.S."/>
            <person name="Taylor T.R."/>
            <person name="Teague B."/>
            <person name="Thomas N."/>
            <person name="Thorn R.D."/>
            <person name="Trejos Z.Y."/>
            <person name="Trevino B.K."/>
            <person name="Ukegbu O.N."/>
            <person name="Urban J.B."/>
            <person name="Vasquez L.I."/>
            <person name="Vera V.A."/>
            <person name="Villasana D.M."/>
            <person name="Wang L."/>
            <person name="Ward-Moore S."/>
            <person name="Warren J.T."/>
            <person name="Wei X."/>
            <person name="White F."/>
            <person name="Williamson A.L."/>
            <person name="Wleczyk R."/>
            <person name="Wooden H.S."/>
            <person name="Wooden S.H."/>
            <person name="Yen J."/>
            <person name="Yoon L."/>
            <person name="Yoon V."/>
            <person name="Zorrilla S.E."/>
            <person name="Nelson D."/>
            <person name="Kucherlapati R."/>
            <person name="Weinstock G."/>
            <person name="Gibbs R.A."/>
        </authorList>
    </citation>
    <scope>NUCLEOTIDE SEQUENCE [LARGE SCALE GENOMIC DNA]</scope>
</reference>
<reference key="7">
    <citation type="submission" date="2005-07" db="EMBL/GenBank/DDBJ databases">
        <authorList>
            <person name="Mural R.J."/>
            <person name="Istrail S."/>
            <person name="Sutton G.G."/>
            <person name="Florea L."/>
            <person name="Halpern A.L."/>
            <person name="Mobarry C.M."/>
            <person name="Lippert R."/>
            <person name="Walenz B."/>
            <person name="Shatkay H."/>
            <person name="Dew I."/>
            <person name="Miller J.R."/>
            <person name="Flanigan M.J."/>
            <person name="Edwards N.J."/>
            <person name="Bolanos R."/>
            <person name="Fasulo D."/>
            <person name="Halldorsson B.V."/>
            <person name="Hannenhalli S."/>
            <person name="Turner R."/>
            <person name="Yooseph S."/>
            <person name="Lu F."/>
            <person name="Nusskern D.R."/>
            <person name="Shue B.C."/>
            <person name="Zheng X.H."/>
            <person name="Zhong F."/>
            <person name="Delcher A.L."/>
            <person name="Huson D.H."/>
            <person name="Kravitz S.A."/>
            <person name="Mouchard L."/>
            <person name="Reinert K."/>
            <person name="Remington K.A."/>
            <person name="Clark A.G."/>
            <person name="Waterman M.S."/>
            <person name="Eichler E.E."/>
            <person name="Adams M.D."/>
            <person name="Hunkapiller M.W."/>
            <person name="Myers E.W."/>
            <person name="Venter J.C."/>
        </authorList>
    </citation>
    <scope>NUCLEOTIDE SEQUENCE [LARGE SCALE GENOMIC DNA]</scope>
</reference>
<reference key="8">
    <citation type="journal article" date="2004" name="Genome Res.">
        <title>The status, quality, and expansion of the NIH full-length cDNA project: the Mammalian Gene Collection (MGC).</title>
        <authorList>
            <consortium name="The MGC Project Team"/>
        </authorList>
    </citation>
    <scope>NUCLEOTIDE SEQUENCE [LARGE SCALE MRNA] (ISOFORM 2)</scope>
    <source>
        <tissue>Muscle</tissue>
    </source>
</reference>
<reference key="9">
    <citation type="journal article" date="1997" name="Genomics">
        <title>Transcript mapping in a 46-kb sequenced region at the core of 12q13.3 amplification in human cancers.</title>
        <authorList>
            <person name="Elkahloun A.G."/>
            <person name="Krizman D.B."/>
            <person name="Wang Z."/>
            <person name="Hofmann T.A."/>
            <person name="Roe B.A."/>
            <person name="Meltzer P.S."/>
        </authorList>
    </citation>
    <scope>NUCLEOTIDE SEQUENCE [GENOMIC DNA] OF 194-667</scope>
</reference>
<reference key="10">
    <citation type="journal article" date="1999" name="FEBS Lett.">
        <title>Ca2(+)-dependent interaction of N-copine, a member of the two C2 domain protein family, with OS-9, the product of a gene frequently amplified in osteosarcoma.</title>
        <authorList>
            <person name="Nakayama T."/>
            <person name="Yaoi T."/>
            <person name="Kuwajima G."/>
            <person name="Yoshie O."/>
            <person name="Sakata T."/>
        </authorList>
    </citation>
    <scope>TISSUE SPECIFICITY</scope>
</reference>
<reference key="11">
    <citation type="journal article" date="2007" name="J. Biol. Chem.">
        <title>OS-9 regulates the transit and polyubiquitination of TRPV4 in the endoplasmic reticulum.</title>
        <authorList>
            <person name="Wang Y."/>
            <person name="Fu X."/>
            <person name="Gaiser S."/>
            <person name="Koettgen M."/>
            <person name="Kramer-Zucker A."/>
            <person name="Walz G."/>
            <person name="Wegierski T."/>
        </authorList>
    </citation>
    <scope>FUNCTION IN TRPV4 MATURATION</scope>
</reference>
<reference key="12">
    <citation type="journal article" date="2008" name="J. Biol. Chem.">
        <title>A dual task for the Xbp1-responsive OS-9 variants in the mammalian endoplasmic reticulum: inhibiting secretion of misfolded protein conformers and enhancing their disposal.</title>
        <authorList>
            <person name="Bernasconi R."/>
            <person name="Pertel T."/>
            <person name="Luban J."/>
            <person name="Molinari M."/>
        </authorList>
    </citation>
    <scope>FUNCTION</scope>
    <scope>ALTERNATIVE SPLICING (ISOFORMS 1 AND 2)</scope>
    <scope>SUBCELLULAR LOCATION</scope>
    <scope>DISULFIDE BONDS</scope>
    <scope>GLYCOSYLATION</scope>
    <scope>INDUCTION</scope>
    <scope>MUTAGENESIS OF ARG-188</scope>
</reference>
<reference key="13">
    <citation type="journal article" date="2008" name="J. Biol. Chem.">
        <title>Human XTP3-B forms an endoplasmic reticulum quality control scaffold with the HRD1-SEL1L ubiquitin ligase complex and BiP.</title>
        <authorList>
            <person name="Hosokawa N."/>
            <person name="Wada I."/>
            <person name="Nagasawa K."/>
            <person name="Moriyama T."/>
            <person name="Okawa K."/>
            <person name="Nagata K."/>
        </authorList>
    </citation>
    <scope>INTERACTION WITH ERLEC1; HSPA5; SEL1L AND SYVN1</scope>
</reference>
<reference key="14">
    <citation type="journal article" date="2008" name="Nat. Cell Biol.">
        <title>OS-9 and GRP94 deliver mutant alpha1-antitrypsin to the Hrd1-SEL1L ubiquitin ligase complex for ERAD.</title>
        <authorList>
            <person name="Christianson J.C."/>
            <person name="Shaler T.A."/>
            <person name="Tyler R.E."/>
            <person name="Kopito R.R."/>
        </authorList>
    </citation>
    <scope>FUNCTION</scope>
    <scope>INTERACTION WITH SEL1L AND SYVN1</scope>
    <scope>SUBCELLULAR LOCATION</scope>
    <scope>GLYCOSYLATION</scope>
    <scope>MUTAGENESIS OF ARG-188</scope>
</reference>
<reference key="15">
    <citation type="journal article" date="2009" name="J. Biol. Chem.">
        <title>Human OS-9, a lectin required for glycoprotein endoplasmic reticulum-associated degradation, recognizes mannose-trimmed N-glycans.</title>
        <authorList>
            <person name="Hosokawa N."/>
            <person name="Kamiya Y."/>
            <person name="Kamiya D."/>
            <person name="Kato K."/>
            <person name="Nagata K."/>
        </authorList>
    </citation>
    <scope>FUNCTION AS A LECTIN</scope>
    <scope>MUTAGENESIS OF ARG-188</scope>
</reference>
<reference key="16">
    <citation type="journal article" date="2009" name="J. Mol. Biol.">
        <title>Mammalian OS-9 is upregulated in response to endoplasmic reticulum stress and facilitates ubiquitination of misfolded glycoproteins.</title>
        <authorList>
            <person name="Alcock F."/>
            <person name="Swanton E."/>
        </authorList>
    </citation>
    <scope>FUNCTION IN MISFOLDED GLYCOPROTEIN UBIQUITINATION</scope>
    <scope>SUBCELLULAR LOCATION</scope>
    <scope>GLYCOSYLATION</scope>
    <scope>INTERACTION WITH DERL2; HRD1 AND SEL1L</scope>
    <scope>INDUCTION BY ER STRESS</scope>
</reference>
<reference key="17">
    <citation type="journal article" date="2010" name="Mol. Immunol.">
        <title>DC-STAMP interacts with ER-resident transcription factor LUMAN which becomes activated during DC maturation.</title>
        <authorList>
            <person name="Eleveld-Trancikova D."/>
            <person name="Sanecka A."/>
            <person name="van Hout-Kuijer M.A."/>
            <person name="Looman M.W."/>
            <person name="Hendriks I.A."/>
            <person name="Jansen B.J."/>
            <person name="Adema G.J."/>
        </authorList>
    </citation>
    <scope>INTERACTION WITH CREB3</scope>
</reference>
<reference key="18">
    <citation type="journal article" date="2014" name="Mol. Biol. Cell">
        <title>OS-9 facilitates turnover of nonnative GRP94 marked by hyperglycosylation.</title>
        <authorList>
            <person name="Dersh D."/>
            <person name="Jones S.M."/>
            <person name="Eletto D."/>
            <person name="Christianson J.C."/>
            <person name="Argon Y."/>
        </authorList>
    </citation>
    <scope>FUNCTION</scope>
</reference>
<reference key="19">
    <citation type="journal article" date="2014" name="J. Proteomics">
        <title>An enzyme assisted RP-RPLC approach for in-depth analysis of human liver phosphoproteome.</title>
        <authorList>
            <person name="Bian Y."/>
            <person name="Song C."/>
            <person name="Cheng K."/>
            <person name="Dong M."/>
            <person name="Wang F."/>
            <person name="Huang J."/>
            <person name="Sun D."/>
            <person name="Wang L."/>
            <person name="Ye M."/>
            <person name="Zou H."/>
        </authorList>
    </citation>
    <scope>IDENTIFICATION BY MASS SPECTROMETRY [LARGE SCALE ANALYSIS]</scope>
    <source>
        <tissue>Liver</tissue>
    </source>
</reference>
<reference key="20">
    <citation type="journal article" date="2015" name="Proteomics">
        <title>N-terminome analysis of the human mitochondrial proteome.</title>
        <authorList>
            <person name="Vaca Jacome A.S."/>
            <person name="Rabilloud T."/>
            <person name="Schaeffer-Reiss C."/>
            <person name="Rompais M."/>
            <person name="Ayoub D."/>
            <person name="Lane L."/>
            <person name="Bairoch A."/>
            <person name="Van Dorsselaer A."/>
            <person name="Carapito C."/>
        </authorList>
    </citation>
    <scope>IDENTIFICATION BY MASS SPECTROMETRY [LARGE SCALE ANALYSIS]</scope>
</reference>
<reference key="21">
    <citation type="journal article" date="2017" name="J. Cell Sci.">
        <title>Conserved cytoplasmic domains promote Hrd1 ubiquitin ligase complex formation for ER-associated degradation (ERAD).</title>
        <authorList>
            <person name="Schulz J."/>
            <person name="Avci D."/>
            <person name="Queisser M.A."/>
            <person name="Gutschmidt A."/>
            <person name="Dreher L.S."/>
            <person name="Fenech E.J."/>
            <person name="Volkmar N."/>
            <person name="Hayashi Y."/>
            <person name="Hoppe T."/>
            <person name="Christianson J.C."/>
        </authorList>
    </citation>
    <scope>IDENTIFICATION IN THE HRD1 COMPLEX</scope>
</reference>
<reference evidence="23" key="22">
    <citation type="journal article" date="2010" name="Mol. Cell">
        <title>Structural basis for oligosaccharide recognition of misfolded glycoproteins by OS-9 in ER-associated degradation.</title>
        <authorList>
            <person name="Satoh T."/>
            <person name="Chen Y."/>
            <person name="Hu D."/>
            <person name="Hanashima S."/>
            <person name="Yamamoto K."/>
            <person name="Yamaguchi Y."/>
        </authorList>
    </citation>
    <scope>X-RAY CRYSTALLOGRAPHY (2.1 ANGSTROMS) OF 108-229 IN COMPLEX WITH MANNOPENTAOSE</scope>
    <scope>FUNCTION</scope>
    <scope>DISULFIDE BONDS</scope>
</reference>
<gene>
    <name type="primary">OS9</name>
</gene>